<accession>C5C7U9</accession>
<dbReference type="EMBL" id="CP001628">
    <property type="protein sequence ID" value="ACS31787.1"/>
    <property type="molecule type" value="Genomic_DNA"/>
</dbReference>
<dbReference type="RefSeq" id="WP_002857788.1">
    <property type="nucleotide sequence ID" value="NZ_WBMF01000158.1"/>
</dbReference>
<dbReference type="SMR" id="C5C7U9"/>
<dbReference type="STRING" id="465515.Mlut_23240"/>
<dbReference type="EnsemblBacteria" id="ACS31787">
    <property type="protein sequence ID" value="ACS31787"/>
    <property type="gene ID" value="Mlut_23240"/>
</dbReference>
<dbReference type="GeneID" id="93363723"/>
<dbReference type="KEGG" id="mlu:Mlut_23240"/>
<dbReference type="eggNOG" id="COG0238">
    <property type="taxonomic scope" value="Bacteria"/>
</dbReference>
<dbReference type="HOGENOM" id="CLU_148710_1_0_11"/>
<dbReference type="Proteomes" id="UP000000738">
    <property type="component" value="Chromosome"/>
</dbReference>
<dbReference type="GO" id="GO:0022627">
    <property type="term" value="C:cytosolic small ribosomal subunit"/>
    <property type="evidence" value="ECO:0007669"/>
    <property type="project" value="TreeGrafter"/>
</dbReference>
<dbReference type="GO" id="GO:0070181">
    <property type="term" value="F:small ribosomal subunit rRNA binding"/>
    <property type="evidence" value="ECO:0007669"/>
    <property type="project" value="TreeGrafter"/>
</dbReference>
<dbReference type="GO" id="GO:0003735">
    <property type="term" value="F:structural constituent of ribosome"/>
    <property type="evidence" value="ECO:0007669"/>
    <property type="project" value="InterPro"/>
</dbReference>
<dbReference type="GO" id="GO:0006412">
    <property type="term" value="P:translation"/>
    <property type="evidence" value="ECO:0007669"/>
    <property type="project" value="UniProtKB-UniRule"/>
</dbReference>
<dbReference type="Gene3D" id="4.10.640.10">
    <property type="entry name" value="Ribosomal protein S18"/>
    <property type="match status" value="1"/>
</dbReference>
<dbReference type="HAMAP" id="MF_00270">
    <property type="entry name" value="Ribosomal_bS18"/>
    <property type="match status" value="1"/>
</dbReference>
<dbReference type="InterPro" id="IPR001648">
    <property type="entry name" value="Ribosomal_bS18"/>
</dbReference>
<dbReference type="InterPro" id="IPR018275">
    <property type="entry name" value="Ribosomal_bS18_CS"/>
</dbReference>
<dbReference type="InterPro" id="IPR036870">
    <property type="entry name" value="Ribosomal_bS18_sf"/>
</dbReference>
<dbReference type="NCBIfam" id="TIGR00165">
    <property type="entry name" value="S18"/>
    <property type="match status" value="1"/>
</dbReference>
<dbReference type="PANTHER" id="PTHR13479">
    <property type="entry name" value="30S RIBOSOMAL PROTEIN S18"/>
    <property type="match status" value="1"/>
</dbReference>
<dbReference type="PANTHER" id="PTHR13479:SF40">
    <property type="entry name" value="SMALL RIBOSOMAL SUBUNIT PROTEIN BS18M"/>
    <property type="match status" value="1"/>
</dbReference>
<dbReference type="Pfam" id="PF01084">
    <property type="entry name" value="Ribosomal_S18"/>
    <property type="match status" value="1"/>
</dbReference>
<dbReference type="PRINTS" id="PR00974">
    <property type="entry name" value="RIBOSOMALS18"/>
</dbReference>
<dbReference type="SUPFAM" id="SSF46911">
    <property type="entry name" value="Ribosomal protein S18"/>
    <property type="match status" value="1"/>
</dbReference>
<dbReference type="PROSITE" id="PS00057">
    <property type="entry name" value="RIBOSOMAL_S18"/>
    <property type="match status" value="1"/>
</dbReference>
<comment type="function">
    <text evidence="1">Binds as a heterodimer with protein bS6 to the central domain of the 16S rRNA, where it helps stabilize the platform of the 30S subunit.</text>
</comment>
<comment type="subunit">
    <text evidence="1">Part of the 30S ribosomal subunit. Forms a tight heterodimer with protein bS6.</text>
</comment>
<comment type="similarity">
    <text evidence="1">Belongs to the bacterial ribosomal protein bS18 family.</text>
</comment>
<keyword id="KW-1185">Reference proteome</keyword>
<keyword id="KW-0687">Ribonucleoprotein</keyword>
<keyword id="KW-0689">Ribosomal protein</keyword>
<keyword id="KW-0694">RNA-binding</keyword>
<keyword id="KW-0699">rRNA-binding</keyword>
<protein>
    <recommendedName>
        <fullName evidence="1">Small ribosomal subunit protein bS18</fullName>
    </recommendedName>
    <alternativeName>
        <fullName evidence="2">30S ribosomal protein S18</fullName>
    </alternativeName>
</protein>
<organism>
    <name type="scientific">Micrococcus luteus (strain ATCC 4698 / DSM 20030 / JCM 1464 / CCM 169 / CCUG 5858 / IAM 1056 / NBRC 3333 / NCIMB 9278 / NCTC 2665 / VKM Ac-2230)</name>
    <name type="common">Micrococcus lysodeikticus</name>
    <dbReference type="NCBI Taxonomy" id="465515"/>
    <lineage>
        <taxon>Bacteria</taxon>
        <taxon>Bacillati</taxon>
        <taxon>Actinomycetota</taxon>
        <taxon>Actinomycetes</taxon>
        <taxon>Micrococcales</taxon>
        <taxon>Micrococcaceae</taxon>
        <taxon>Micrococcus</taxon>
    </lineage>
</organism>
<gene>
    <name evidence="1" type="primary">rpsR</name>
    <name type="ordered locus">Mlut_23240</name>
</gene>
<name>RS18_MICLC</name>
<proteinExistence type="inferred from homology"/>
<sequence>MAKAELRKPKPKSNPLKAAKITEIDYKDVALLRKFISDRGKIRARRVTGVTVQEQRKIAQAVKNAREVALLPYAGAGRG</sequence>
<reference key="1">
    <citation type="journal article" date="2010" name="J. Bacteriol.">
        <title>Genome sequence of the Fleming strain of Micrococcus luteus, a simple free-living actinobacterium.</title>
        <authorList>
            <person name="Young M."/>
            <person name="Artsatbanov V."/>
            <person name="Beller H.R."/>
            <person name="Chandra G."/>
            <person name="Chater K.F."/>
            <person name="Dover L.G."/>
            <person name="Goh E.B."/>
            <person name="Kahan T."/>
            <person name="Kaprelyants A.S."/>
            <person name="Kyrpides N."/>
            <person name="Lapidus A."/>
            <person name="Lowry S.R."/>
            <person name="Lykidis A."/>
            <person name="Mahillon J."/>
            <person name="Markowitz V."/>
            <person name="Mavromatis K."/>
            <person name="Mukamolova G.V."/>
            <person name="Oren A."/>
            <person name="Rokem J.S."/>
            <person name="Smith M.C."/>
            <person name="Young D.I."/>
            <person name="Greenblatt C.L."/>
        </authorList>
    </citation>
    <scope>NUCLEOTIDE SEQUENCE [LARGE SCALE GENOMIC DNA]</scope>
    <source>
        <strain>ATCC 4698 / DSM 20030 / JCM 1464 / CCM 169 / CCUG 5858 / IAM 1056 / NBRC 3333 / NCIMB 9278 / NCTC 2665 / VKM Ac-2230</strain>
    </source>
</reference>
<feature type="chain" id="PRO_1000204732" description="Small ribosomal subunit protein bS18">
    <location>
        <begin position="1"/>
        <end position="79"/>
    </location>
</feature>
<evidence type="ECO:0000255" key="1">
    <source>
        <dbReference type="HAMAP-Rule" id="MF_00270"/>
    </source>
</evidence>
<evidence type="ECO:0000305" key="2"/>